<name>AROD_STRA5</name>
<keyword id="KW-0028">Amino-acid biosynthesis</keyword>
<keyword id="KW-0057">Aromatic amino acid biosynthesis</keyword>
<keyword id="KW-0456">Lyase</keyword>
<keyword id="KW-1185">Reference proteome</keyword>
<keyword id="KW-0704">Schiff base</keyword>
<comment type="function">
    <text evidence="1">Involved in the third step of the chorismate pathway, which leads to the biosynthesis of aromatic amino acids. Catalyzes the cis-dehydration of 3-dehydroquinate (DHQ) and introduces the first double bond of the aromatic ring to yield 3-dehydroshikimate.</text>
</comment>
<comment type="catalytic activity">
    <reaction evidence="1">
        <text>3-dehydroquinate = 3-dehydroshikimate + H2O</text>
        <dbReference type="Rhea" id="RHEA:21096"/>
        <dbReference type="ChEBI" id="CHEBI:15377"/>
        <dbReference type="ChEBI" id="CHEBI:16630"/>
        <dbReference type="ChEBI" id="CHEBI:32364"/>
        <dbReference type="EC" id="4.2.1.10"/>
    </reaction>
</comment>
<comment type="pathway">
    <text evidence="1">Metabolic intermediate biosynthesis; chorismate biosynthesis; chorismate from D-erythrose 4-phosphate and phosphoenolpyruvate: step 3/7.</text>
</comment>
<comment type="subunit">
    <text evidence="1">Homodimer.</text>
</comment>
<comment type="similarity">
    <text evidence="1">Belongs to the type-I 3-dehydroquinase family.</text>
</comment>
<organism>
    <name type="scientific">Streptococcus agalactiae serotype V (strain ATCC BAA-611 / 2603 V/R)</name>
    <dbReference type="NCBI Taxonomy" id="208435"/>
    <lineage>
        <taxon>Bacteria</taxon>
        <taxon>Bacillati</taxon>
        <taxon>Bacillota</taxon>
        <taxon>Bacilli</taxon>
        <taxon>Lactobacillales</taxon>
        <taxon>Streptococcaceae</taxon>
        <taxon>Streptococcus</taxon>
    </lineage>
</organism>
<feature type="chain" id="PRO_1000043193" description="3-dehydroquinate dehydratase">
    <location>
        <begin position="1"/>
        <end position="225"/>
    </location>
</feature>
<feature type="active site" description="Proton donor/acceptor" evidence="1">
    <location>
        <position position="118"/>
    </location>
</feature>
<feature type="active site" description="Schiff-base intermediate with substrate" evidence="1">
    <location>
        <position position="143"/>
    </location>
</feature>
<feature type="binding site" evidence="1">
    <location>
        <begin position="30"/>
        <end position="32"/>
    </location>
    <ligand>
        <name>3-dehydroquinate</name>
        <dbReference type="ChEBI" id="CHEBI:32364"/>
    </ligand>
</feature>
<feature type="binding site" evidence="1">
    <location>
        <position position="62"/>
    </location>
    <ligand>
        <name>3-dehydroquinate</name>
        <dbReference type="ChEBI" id="CHEBI:32364"/>
    </ligand>
</feature>
<feature type="binding site" evidence="1">
    <location>
        <position position="186"/>
    </location>
    <ligand>
        <name>3-dehydroquinate</name>
        <dbReference type="ChEBI" id="CHEBI:32364"/>
    </ligand>
</feature>
<feature type="binding site" evidence="1">
    <location>
        <position position="209"/>
    </location>
    <ligand>
        <name>3-dehydroquinate</name>
        <dbReference type="ChEBI" id="CHEBI:32364"/>
    </ligand>
</feature>
<gene>
    <name evidence="1" type="primary">aroD</name>
    <name type="ordered locus">SAG1379</name>
</gene>
<sequence>MKIVVPVMPRSLEEAQEIDLSKFDSVDIIEWRADALPKDDIINVAPAIFEKFAGHEIIFTLRTTREGGNIVLSDAEYVELIQKINSIYNPDYIDFEYFSHKEVFQEMLEFPNLVLSYHNFQETPENIMEIFSELTALAPRVVKIAVMPKNEQDVLDVMNYTRGFKTINPDQVYATVSMSKIGRISRFAGDVTGSSWTFAYLDSSIAPGQITISEMKRVKALLDAD</sequence>
<accession>Q8DYU4</accession>
<evidence type="ECO:0000255" key="1">
    <source>
        <dbReference type="HAMAP-Rule" id="MF_00214"/>
    </source>
</evidence>
<reference key="1">
    <citation type="journal article" date="2002" name="Proc. Natl. Acad. Sci. U.S.A.">
        <title>Complete genome sequence and comparative genomic analysis of an emerging human pathogen, serotype V Streptococcus agalactiae.</title>
        <authorList>
            <person name="Tettelin H."/>
            <person name="Masignani V."/>
            <person name="Cieslewicz M.J."/>
            <person name="Eisen J.A."/>
            <person name="Peterson S.N."/>
            <person name="Wessels M.R."/>
            <person name="Paulsen I.T."/>
            <person name="Nelson K.E."/>
            <person name="Margarit I."/>
            <person name="Read T.D."/>
            <person name="Madoff L.C."/>
            <person name="Wolf A.M."/>
            <person name="Beanan M.J."/>
            <person name="Brinkac L.M."/>
            <person name="Daugherty S.C."/>
            <person name="DeBoy R.T."/>
            <person name="Durkin A.S."/>
            <person name="Kolonay J.F."/>
            <person name="Madupu R."/>
            <person name="Lewis M.R."/>
            <person name="Radune D."/>
            <person name="Fedorova N.B."/>
            <person name="Scanlan D."/>
            <person name="Khouri H.M."/>
            <person name="Mulligan S."/>
            <person name="Carty H.A."/>
            <person name="Cline R.T."/>
            <person name="Van Aken S.E."/>
            <person name="Gill J."/>
            <person name="Scarselli M."/>
            <person name="Mora M."/>
            <person name="Iacobini E.T."/>
            <person name="Brettoni C."/>
            <person name="Galli G."/>
            <person name="Mariani M."/>
            <person name="Vegni F."/>
            <person name="Maione D."/>
            <person name="Rinaudo D."/>
            <person name="Rappuoli R."/>
            <person name="Telford J.L."/>
            <person name="Kasper D.L."/>
            <person name="Grandi G."/>
            <person name="Fraser C.M."/>
        </authorList>
    </citation>
    <scope>NUCLEOTIDE SEQUENCE [LARGE SCALE GENOMIC DNA]</scope>
    <source>
        <strain>ATCC BAA-611 / 2603 V/R</strain>
    </source>
</reference>
<proteinExistence type="inferred from homology"/>
<dbReference type="EC" id="4.2.1.10" evidence="1"/>
<dbReference type="EMBL" id="AE009948">
    <property type="protein sequence ID" value="AAN00250.1"/>
    <property type="molecule type" value="Genomic_DNA"/>
</dbReference>
<dbReference type="RefSeq" id="NP_688377.1">
    <property type="nucleotide sequence ID" value="NC_004116.1"/>
</dbReference>
<dbReference type="RefSeq" id="WP_000707048.1">
    <property type="nucleotide sequence ID" value="NC_004116.1"/>
</dbReference>
<dbReference type="SMR" id="Q8DYU4"/>
<dbReference type="STRING" id="208435.SAG1379"/>
<dbReference type="GeneID" id="66886255"/>
<dbReference type="KEGG" id="sag:SAG1379"/>
<dbReference type="PATRIC" id="fig|208435.3.peg.1387"/>
<dbReference type="HOGENOM" id="CLU_064444_0_0_9"/>
<dbReference type="OrthoDB" id="9813659at2"/>
<dbReference type="UniPathway" id="UPA00053">
    <property type="reaction ID" value="UER00086"/>
</dbReference>
<dbReference type="Proteomes" id="UP000000821">
    <property type="component" value="Chromosome"/>
</dbReference>
<dbReference type="GO" id="GO:0003855">
    <property type="term" value="F:3-dehydroquinate dehydratase activity"/>
    <property type="evidence" value="ECO:0007669"/>
    <property type="project" value="UniProtKB-UniRule"/>
</dbReference>
<dbReference type="GO" id="GO:0046279">
    <property type="term" value="P:3,4-dihydroxybenzoate biosynthetic process"/>
    <property type="evidence" value="ECO:0007669"/>
    <property type="project" value="TreeGrafter"/>
</dbReference>
<dbReference type="GO" id="GO:0008652">
    <property type="term" value="P:amino acid biosynthetic process"/>
    <property type="evidence" value="ECO:0007669"/>
    <property type="project" value="UniProtKB-KW"/>
</dbReference>
<dbReference type="GO" id="GO:0009073">
    <property type="term" value="P:aromatic amino acid family biosynthetic process"/>
    <property type="evidence" value="ECO:0007669"/>
    <property type="project" value="UniProtKB-KW"/>
</dbReference>
<dbReference type="GO" id="GO:0009423">
    <property type="term" value="P:chorismate biosynthetic process"/>
    <property type="evidence" value="ECO:0007669"/>
    <property type="project" value="UniProtKB-UniRule"/>
</dbReference>
<dbReference type="CDD" id="cd00502">
    <property type="entry name" value="DHQase_I"/>
    <property type="match status" value="1"/>
</dbReference>
<dbReference type="FunFam" id="3.20.20.70:FF:000047">
    <property type="entry name" value="3-dehydroquinate dehydratase"/>
    <property type="match status" value="1"/>
</dbReference>
<dbReference type="Gene3D" id="3.20.20.70">
    <property type="entry name" value="Aldolase class I"/>
    <property type="match status" value="1"/>
</dbReference>
<dbReference type="HAMAP" id="MF_00214">
    <property type="entry name" value="AroD"/>
    <property type="match status" value="1"/>
</dbReference>
<dbReference type="InterPro" id="IPR013785">
    <property type="entry name" value="Aldolase_TIM"/>
</dbReference>
<dbReference type="InterPro" id="IPR001381">
    <property type="entry name" value="DHquinase_I"/>
</dbReference>
<dbReference type="InterPro" id="IPR050146">
    <property type="entry name" value="Type-I_3-dehydroquinase"/>
</dbReference>
<dbReference type="NCBIfam" id="TIGR01093">
    <property type="entry name" value="aroD"/>
    <property type="match status" value="1"/>
</dbReference>
<dbReference type="PANTHER" id="PTHR43699">
    <property type="entry name" value="3-DEHYDROQUINATE DEHYDRATASE"/>
    <property type="match status" value="1"/>
</dbReference>
<dbReference type="PANTHER" id="PTHR43699:SF1">
    <property type="entry name" value="3-DEHYDROQUINATE DEHYDRATASE"/>
    <property type="match status" value="1"/>
</dbReference>
<dbReference type="Pfam" id="PF01487">
    <property type="entry name" value="DHquinase_I"/>
    <property type="match status" value="1"/>
</dbReference>
<dbReference type="SUPFAM" id="SSF51569">
    <property type="entry name" value="Aldolase"/>
    <property type="match status" value="1"/>
</dbReference>
<protein>
    <recommendedName>
        <fullName evidence="1">3-dehydroquinate dehydratase</fullName>
        <shortName evidence="1">3-dehydroquinase</shortName>
        <ecNumber evidence="1">4.2.1.10</ecNumber>
    </recommendedName>
    <alternativeName>
        <fullName evidence="1">Type I DHQase</fullName>
    </alternativeName>
    <alternativeName>
        <fullName evidence="1">Type I dehydroquinase</fullName>
        <shortName evidence="1">DHQ1</shortName>
    </alternativeName>
</protein>